<feature type="chain" id="PRO_0000235078" description="4-diphosphocytidyl-2-C-methyl-D-erythritol kinase">
    <location>
        <begin position="1"/>
        <end position="288"/>
    </location>
</feature>
<feature type="active site" evidence="1">
    <location>
        <position position="8"/>
    </location>
</feature>
<feature type="active site" evidence="1">
    <location>
        <position position="132"/>
    </location>
</feature>
<feature type="binding site" evidence="1">
    <location>
        <begin position="90"/>
        <end position="100"/>
    </location>
    <ligand>
        <name>ATP</name>
        <dbReference type="ChEBI" id="CHEBI:30616"/>
    </ligand>
</feature>
<comment type="function">
    <text evidence="1">Catalyzes the phosphorylation of the position 2 hydroxy group of 4-diphosphocytidyl-2C-methyl-D-erythritol.</text>
</comment>
<comment type="catalytic activity">
    <reaction evidence="1">
        <text>4-CDP-2-C-methyl-D-erythritol + ATP = 4-CDP-2-C-methyl-D-erythritol 2-phosphate + ADP + H(+)</text>
        <dbReference type="Rhea" id="RHEA:18437"/>
        <dbReference type="ChEBI" id="CHEBI:15378"/>
        <dbReference type="ChEBI" id="CHEBI:30616"/>
        <dbReference type="ChEBI" id="CHEBI:57823"/>
        <dbReference type="ChEBI" id="CHEBI:57919"/>
        <dbReference type="ChEBI" id="CHEBI:456216"/>
        <dbReference type="EC" id="2.7.1.148"/>
    </reaction>
</comment>
<comment type="pathway">
    <text evidence="1">Isoprenoid biosynthesis; isopentenyl diphosphate biosynthesis via DXP pathway; isopentenyl diphosphate from 1-deoxy-D-xylulose 5-phosphate: step 3/6.</text>
</comment>
<comment type="similarity">
    <text evidence="1">Belongs to the GHMP kinase family. IspE subfamily.</text>
</comment>
<keyword id="KW-0067">ATP-binding</keyword>
<keyword id="KW-0414">Isoprene biosynthesis</keyword>
<keyword id="KW-0418">Kinase</keyword>
<keyword id="KW-0547">Nucleotide-binding</keyword>
<keyword id="KW-1185">Reference proteome</keyword>
<keyword id="KW-0808">Transferase</keyword>
<accession>Q3AFM4</accession>
<dbReference type="EC" id="2.7.1.148" evidence="1"/>
<dbReference type="EMBL" id="CP000141">
    <property type="protein sequence ID" value="ABB15913.1"/>
    <property type="molecule type" value="Genomic_DNA"/>
</dbReference>
<dbReference type="RefSeq" id="WP_011343136.1">
    <property type="nucleotide sequence ID" value="NC_007503.1"/>
</dbReference>
<dbReference type="SMR" id="Q3AFM4"/>
<dbReference type="FunCoup" id="Q3AFM4">
    <property type="interactions" value="411"/>
</dbReference>
<dbReference type="STRING" id="246194.CHY_0188"/>
<dbReference type="KEGG" id="chy:CHY_0188"/>
<dbReference type="eggNOG" id="COG1947">
    <property type="taxonomic scope" value="Bacteria"/>
</dbReference>
<dbReference type="HOGENOM" id="CLU_053057_1_1_9"/>
<dbReference type="InParanoid" id="Q3AFM4"/>
<dbReference type="OrthoDB" id="9809438at2"/>
<dbReference type="UniPathway" id="UPA00056">
    <property type="reaction ID" value="UER00094"/>
</dbReference>
<dbReference type="Proteomes" id="UP000002706">
    <property type="component" value="Chromosome"/>
</dbReference>
<dbReference type="GO" id="GO:0050515">
    <property type="term" value="F:4-(cytidine 5'-diphospho)-2-C-methyl-D-erythritol kinase activity"/>
    <property type="evidence" value="ECO:0007669"/>
    <property type="project" value="UniProtKB-UniRule"/>
</dbReference>
<dbReference type="GO" id="GO:0005524">
    <property type="term" value="F:ATP binding"/>
    <property type="evidence" value="ECO:0007669"/>
    <property type="project" value="UniProtKB-UniRule"/>
</dbReference>
<dbReference type="GO" id="GO:0019288">
    <property type="term" value="P:isopentenyl diphosphate biosynthetic process, methylerythritol 4-phosphate pathway"/>
    <property type="evidence" value="ECO:0007669"/>
    <property type="project" value="UniProtKB-UniRule"/>
</dbReference>
<dbReference type="GO" id="GO:0016114">
    <property type="term" value="P:terpenoid biosynthetic process"/>
    <property type="evidence" value="ECO:0007669"/>
    <property type="project" value="InterPro"/>
</dbReference>
<dbReference type="Gene3D" id="3.30.230.10">
    <property type="match status" value="1"/>
</dbReference>
<dbReference type="Gene3D" id="3.30.70.890">
    <property type="entry name" value="GHMP kinase, C-terminal domain"/>
    <property type="match status" value="1"/>
</dbReference>
<dbReference type="HAMAP" id="MF_00061">
    <property type="entry name" value="IspE"/>
    <property type="match status" value="1"/>
</dbReference>
<dbReference type="InterPro" id="IPR013750">
    <property type="entry name" value="GHMP_kinase_C_dom"/>
</dbReference>
<dbReference type="InterPro" id="IPR036554">
    <property type="entry name" value="GHMP_kinase_C_sf"/>
</dbReference>
<dbReference type="InterPro" id="IPR006204">
    <property type="entry name" value="GHMP_kinase_N_dom"/>
</dbReference>
<dbReference type="InterPro" id="IPR004424">
    <property type="entry name" value="IspE"/>
</dbReference>
<dbReference type="InterPro" id="IPR020568">
    <property type="entry name" value="Ribosomal_Su5_D2-typ_SF"/>
</dbReference>
<dbReference type="InterPro" id="IPR014721">
    <property type="entry name" value="Ribsml_uS5_D2-typ_fold_subgr"/>
</dbReference>
<dbReference type="NCBIfam" id="TIGR00154">
    <property type="entry name" value="ispE"/>
    <property type="match status" value="1"/>
</dbReference>
<dbReference type="PANTHER" id="PTHR43527">
    <property type="entry name" value="4-DIPHOSPHOCYTIDYL-2-C-METHYL-D-ERYTHRITOL KINASE, CHLOROPLASTIC"/>
    <property type="match status" value="1"/>
</dbReference>
<dbReference type="PANTHER" id="PTHR43527:SF2">
    <property type="entry name" value="4-DIPHOSPHOCYTIDYL-2-C-METHYL-D-ERYTHRITOL KINASE, CHLOROPLASTIC"/>
    <property type="match status" value="1"/>
</dbReference>
<dbReference type="Pfam" id="PF08544">
    <property type="entry name" value="GHMP_kinases_C"/>
    <property type="match status" value="1"/>
</dbReference>
<dbReference type="Pfam" id="PF00288">
    <property type="entry name" value="GHMP_kinases_N"/>
    <property type="match status" value="1"/>
</dbReference>
<dbReference type="PIRSF" id="PIRSF010376">
    <property type="entry name" value="IspE"/>
    <property type="match status" value="1"/>
</dbReference>
<dbReference type="SUPFAM" id="SSF55060">
    <property type="entry name" value="GHMP Kinase, C-terminal domain"/>
    <property type="match status" value="1"/>
</dbReference>
<dbReference type="SUPFAM" id="SSF54211">
    <property type="entry name" value="Ribosomal protein S5 domain 2-like"/>
    <property type="match status" value="1"/>
</dbReference>
<reference key="1">
    <citation type="journal article" date="2005" name="PLoS Genet.">
        <title>Life in hot carbon monoxide: the complete genome sequence of Carboxydothermus hydrogenoformans Z-2901.</title>
        <authorList>
            <person name="Wu M."/>
            <person name="Ren Q."/>
            <person name="Durkin A.S."/>
            <person name="Daugherty S.C."/>
            <person name="Brinkac L.M."/>
            <person name="Dodson R.J."/>
            <person name="Madupu R."/>
            <person name="Sullivan S.A."/>
            <person name="Kolonay J.F."/>
            <person name="Nelson W.C."/>
            <person name="Tallon L.J."/>
            <person name="Jones K.M."/>
            <person name="Ulrich L.E."/>
            <person name="Gonzalez J.M."/>
            <person name="Zhulin I.B."/>
            <person name="Robb F.T."/>
            <person name="Eisen J.A."/>
        </authorList>
    </citation>
    <scope>NUCLEOTIDE SEQUENCE [LARGE SCALE GENOMIC DNA]</scope>
    <source>
        <strain>ATCC BAA-161 / DSM 6008 / Z-2901</strain>
    </source>
</reference>
<proteinExistence type="inferred from homology"/>
<name>ISPE_CARHZ</name>
<evidence type="ECO:0000255" key="1">
    <source>
        <dbReference type="HAMAP-Rule" id="MF_00061"/>
    </source>
</evidence>
<organism>
    <name type="scientific">Carboxydothermus hydrogenoformans (strain ATCC BAA-161 / DSM 6008 / Z-2901)</name>
    <dbReference type="NCBI Taxonomy" id="246194"/>
    <lineage>
        <taxon>Bacteria</taxon>
        <taxon>Bacillati</taxon>
        <taxon>Bacillota</taxon>
        <taxon>Clostridia</taxon>
        <taxon>Thermoanaerobacterales</taxon>
        <taxon>Thermoanaerobacteraceae</taxon>
        <taxon>Carboxydothermus</taxon>
    </lineage>
</organism>
<gene>
    <name evidence="1" type="primary">ispE</name>
    <name type="ordered locus">CHY_0188</name>
</gene>
<sequence length="288" mass="31185">MLIFAPAKINLTLDILGKRPDGYHELWSVMQAITLGDLVEIEPAEGINLRVVGADLPVDSTNIAFKAVQALRAATGKAIGASITIRKKIPLEAGLAGGSADGAAVLYGLNKLYNLNLSQEELLEIGAKISADIPFCLTGGTALVQGIGEKVKKLPPLKKGYFVIYKPPFGISTKEAYLRLAGKDLTKEHPDREKILKALGKENLEDLGKFLKNLLEISALEINPEIYKYKNELLNLKPLGVLMSGSGSALFALTENLKKAKEIYYQLTLPGQKFIVRPYAAGPTCLKL</sequence>
<protein>
    <recommendedName>
        <fullName evidence="1">4-diphosphocytidyl-2-C-methyl-D-erythritol kinase</fullName>
        <shortName evidence="1">CMK</shortName>
        <ecNumber evidence="1">2.7.1.148</ecNumber>
    </recommendedName>
    <alternativeName>
        <fullName evidence="1">4-(cytidine-5'-diphospho)-2-C-methyl-D-erythritol kinase</fullName>
    </alternativeName>
</protein>